<dbReference type="EMBL" id="CP000728">
    <property type="protein sequence ID" value="ABS41558.1"/>
    <property type="molecule type" value="Genomic_DNA"/>
</dbReference>
<dbReference type="RefSeq" id="WP_003357676.1">
    <property type="nucleotide sequence ID" value="NC_009699.1"/>
</dbReference>
<dbReference type="SMR" id="A7GJ79"/>
<dbReference type="GeneID" id="92940255"/>
<dbReference type="KEGG" id="cbf:CLI_3668"/>
<dbReference type="HOGENOM" id="CLU_104295_1_2_9"/>
<dbReference type="Proteomes" id="UP000002410">
    <property type="component" value="Chromosome"/>
</dbReference>
<dbReference type="GO" id="GO:0015935">
    <property type="term" value="C:small ribosomal subunit"/>
    <property type="evidence" value="ECO:0007669"/>
    <property type="project" value="InterPro"/>
</dbReference>
<dbReference type="GO" id="GO:0019843">
    <property type="term" value="F:rRNA binding"/>
    <property type="evidence" value="ECO:0007669"/>
    <property type="project" value="UniProtKB-UniRule"/>
</dbReference>
<dbReference type="GO" id="GO:0003735">
    <property type="term" value="F:structural constituent of ribosome"/>
    <property type="evidence" value="ECO:0007669"/>
    <property type="project" value="InterPro"/>
</dbReference>
<dbReference type="GO" id="GO:0000049">
    <property type="term" value="F:tRNA binding"/>
    <property type="evidence" value="ECO:0007669"/>
    <property type="project" value="UniProtKB-UniRule"/>
</dbReference>
<dbReference type="GO" id="GO:0006412">
    <property type="term" value="P:translation"/>
    <property type="evidence" value="ECO:0007669"/>
    <property type="project" value="UniProtKB-UniRule"/>
</dbReference>
<dbReference type="CDD" id="cd03368">
    <property type="entry name" value="Ribosomal_S12"/>
    <property type="match status" value="1"/>
</dbReference>
<dbReference type="FunFam" id="2.40.50.140:FF:000001">
    <property type="entry name" value="30S ribosomal protein S12"/>
    <property type="match status" value="1"/>
</dbReference>
<dbReference type="Gene3D" id="2.40.50.140">
    <property type="entry name" value="Nucleic acid-binding proteins"/>
    <property type="match status" value="1"/>
</dbReference>
<dbReference type="HAMAP" id="MF_00403_B">
    <property type="entry name" value="Ribosomal_uS12_B"/>
    <property type="match status" value="1"/>
</dbReference>
<dbReference type="InterPro" id="IPR012340">
    <property type="entry name" value="NA-bd_OB-fold"/>
</dbReference>
<dbReference type="InterPro" id="IPR006032">
    <property type="entry name" value="Ribosomal_uS12"/>
</dbReference>
<dbReference type="InterPro" id="IPR005679">
    <property type="entry name" value="Ribosomal_uS12_bac"/>
</dbReference>
<dbReference type="NCBIfam" id="TIGR00981">
    <property type="entry name" value="rpsL_bact"/>
    <property type="match status" value="1"/>
</dbReference>
<dbReference type="PANTHER" id="PTHR11652">
    <property type="entry name" value="30S RIBOSOMAL PROTEIN S12 FAMILY MEMBER"/>
    <property type="match status" value="1"/>
</dbReference>
<dbReference type="Pfam" id="PF00164">
    <property type="entry name" value="Ribosom_S12_S23"/>
    <property type="match status" value="1"/>
</dbReference>
<dbReference type="PIRSF" id="PIRSF002133">
    <property type="entry name" value="Ribosomal_S12/S23"/>
    <property type="match status" value="1"/>
</dbReference>
<dbReference type="PRINTS" id="PR01034">
    <property type="entry name" value="RIBOSOMALS12"/>
</dbReference>
<dbReference type="SUPFAM" id="SSF50249">
    <property type="entry name" value="Nucleic acid-binding proteins"/>
    <property type="match status" value="1"/>
</dbReference>
<dbReference type="PROSITE" id="PS00055">
    <property type="entry name" value="RIBOSOMAL_S12"/>
    <property type="match status" value="1"/>
</dbReference>
<comment type="function">
    <text evidence="2">With S4 and S5 plays an important role in translational accuracy.</text>
</comment>
<comment type="function">
    <text evidence="2">Interacts with and stabilizes bases of the 16S rRNA that are involved in tRNA selection in the A site and with the mRNA backbone. Located at the interface of the 30S and 50S subunits, it traverses the body of the 30S subunit contacting proteins on the other side and probably holding the rRNA structure together. The combined cluster of proteins S8, S12 and S17 appears to hold together the shoulder and platform of the 30S subunit.</text>
</comment>
<comment type="subunit">
    <text evidence="2">Part of the 30S ribosomal subunit. Contacts proteins S8 and S17. May interact with IF1 in the 30S initiation complex.</text>
</comment>
<comment type="similarity">
    <text evidence="2">Belongs to the universal ribosomal protein uS12 family.</text>
</comment>
<sequence length="125" mass="13614">MPTISQLVRKGRKTIASASDSPALKECPQKRGVCTVVKTTTPKKPNSALRKVARIRLTNGYEVTAYIPGVGHNLQEHSVVLIRGGRVKDLPGVRYHIVRGALDAAGVANRMQSRSKYGAKKPKQK</sequence>
<gene>
    <name evidence="2" type="primary">rpsL</name>
    <name type="ordered locus">CLI_3668</name>
</gene>
<feature type="chain" id="PRO_1000049783" description="Small ribosomal subunit protein uS12">
    <location>
        <begin position="1"/>
        <end position="125"/>
    </location>
</feature>
<feature type="modified residue" description="3-methylthioaspartic acid" evidence="1">
    <location>
        <position position="89"/>
    </location>
</feature>
<accession>A7GJ79</accession>
<proteinExistence type="inferred from homology"/>
<evidence type="ECO:0000250" key="1"/>
<evidence type="ECO:0000255" key="2">
    <source>
        <dbReference type="HAMAP-Rule" id="MF_00403"/>
    </source>
</evidence>
<evidence type="ECO:0000305" key="3"/>
<reference key="1">
    <citation type="submission" date="2007-06" db="EMBL/GenBank/DDBJ databases">
        <authorList>
            <person name="Brinkac L.M."/>
            <person name="Daugherty S."/>
            <person name="Dodson R.J."/>
            <person name="Madupu R."/>
            <person name="Brown J.L."/>
            <person name="Bruce D."/>
            <person name="Detter C."/>
            <person name="Munk C."/>
            <person name="Smith L.A."/>
            <person name="Smith T.J."/>
            <person name="White O."/>
            <person name="Brettin T.S."/>
        </authorList>
    </citation>
    <scope>NUCLEOTIDE SEQUENCE [LARGE SCALE GENOMIC DNA]</scope>
    <source>
        <strain>Langeland / NCTC 10281 / Type F</strain>
    </source>
</reference>
<organism>
    <name type="scientific">Clostridium botulinum (strain Langeland / NCTC 10281 / Type F)</name>
    <dbReference type="NCBI Taxonomy" id="441772"/>
    <lineage>
        <taxon>Bacteria</taxon>
        <taxon>Bacillati</taxon>
        <taxon>Bacillota</taxon>
        <taxon>Clostridia</taxon>
        <taxon>Eubacteriales</taxon>
        <taxon>Clostridiaceae</taxon>
        <taxon>Clostridium</taxon>
    </lineage>
</organism>
<keyword id="KW-0488">Methylation</keyword>
<keyword id="KW-0687">Ribonucleoprotein</keyword>
<keyword id="KW-0689">Ribosomal protein</keyword>
<keyword id="KW-0694">RNA-binding</keyword>
<keyword id="KW-0699">rRNA-binding</keyword>
<keyword id="KW-0820">tRNA-binding</keyword>
<protein>
    <recommendedName>
        <fullName evidence="2">Small ribosomal subunit protein uS12</fullName>
    </recommendedName>
    <alternativeName>
        <fullName evidence="3">30S ribosomal protein S12</fullName>
    </alternativeName>
</protein>
<name>RS12_CLOBL</name>